<gene>
    <name evidence="5" type="primary">ATG14</name>
    <name type="ordered locus">CAGL0C00627g</name>
</gene>
<reference key="1">
    <citation type="journal article" date="2004" name="Nature">
        <title>Genome evolution in yeasts.</title>
        <authorList>
            <person name="Dujon B."/>
            <person name="Sherman D."/>
            <person name="Fischer G."/>
            <person name="Durrens P."/>
            <person name="Casaregola S."/>
            <person name="Lafontaine I."/>
            <person name="de Montigny J."/>
            <person name="Marck C."/>
            <person name="Neuveglise C."/>
            <person name="Talla E."/>
            <person name="Goffard N."/>
            <person name="Frangeul L."/>
            <person name="Aigle M."/>
            <person name="Anthouard V."/>
            <person name="Babour A."/>
            <person name="Barbe V."/>
            <person name="Barnay S."/>
            <person name="Blanchin S."/>
            <person name="Beckerich J.-M."/>
            <person name="Beyne E."/>
            <person name="Bleykasten C."/>
            <person name="Boisrame A."/>
            <person name="Boyer J."/>
            <person name="Cattolico L."/>
            <person name="Confanioleri F."/>
            <person name="de Daruvar A."/>
            <person name="Despons L."/>
            <person name="Fabre E."/>
            <person name="Fairhead C."/>
            <person name="Ferry-Dumazet H."/>
            <person name="Groppi A."/>
            <person name="Hantraye F."/>
            <person name="Hennequin C."/>
            <person name="Jauniaux N."/>
            <person name="Joyet P."/>
            <person name="Kachouri R."/>
            <person name="Kerrest A."/>
            <person name="Koszul R."/>
            <person name="Lemaire M."/>
            <person name="Lesur I."/>
            <person name="Ma L."/>
            <person name="Muller H."/>
            <person name="Nicaud J.-M."/>
            <person name="Nikolski M."/>
            <person name="Oztas S."/>
            <person name="Ozier-Kalogeropoulos O."/>
            <person name="Pellenz S."/>
            <person name="Potier S."/>
            <person name="Richard G.-F."/>
            <person name="Straub M.-L."/>
            <person name="Suleau A."/>
            <person name="Swennen D."/>
            <person name="Tekaia F."/>
            <person name="Wesolowski-Louvel M."/>
            <person name="Westhof E."/>
            <person name="Wirth B."/>
            <person name="Zeniou-Meyer M."/>
            <person name="Zivanovic Y."/>
            <person name="Bolotin-Fukuhara M."/>
            <person name="Thierry A."/>
            <person name="Bouchier C."/>
            <person name="Caudron B."/>
            <person name="Scarpelli C."/>
            <person name="Gaillardin C."/>
            <person name="Weissenbach J."/>
            <person name="Wincker P."/>
            <person name="Souciet J.-L."/>
        </authorList>
    </citation>
    <scope>NUCLEOTIDE SEQUENCE [LARGE SCALE GENOMIC DNA]</scope>
    <source>
        <strain>ATCC 2001 / BCRC 20586 / JCM 3761 / NBRC 0622 / NRRL Y-65 / CBS 138</strain>
    </source>
</reference>
<reference key="2">
    <citation type="journal article" date="2015" name="Cell. Microbiol.">
        <title>An essential role for phosphatidylinositol 3-kinase in the inhibition of phagosomal maturation, intracellular survival and virulence in Candida glabrata.</title>
        <authorList>
            <person name="Rai M.N."/>
            <person name="Sharma V."/>
            <person name="Balusu S."/>
            <person name="Kaur R."/>
        </authorList>
    </citation>
    <scope>FUNCTION</scope>
    <scope>DISRUPTION PHENOTYPE</scope>
</reference>
<proteinExistence type="inferred from homology"/>
<name>ATG14_CANGA</name>
<evidence type="ECO:0000250" key="1"/>
<evidence type="ECO:0000250" key="2">
    <source>
        <dbReference type="UniProtKB" id="P38270"/>
    </source>
</evidence>
<evidence type="ECO:0000255" key="3"/>
<evidence type="ECO:0000269" key="4">
    <source>
    </source>
</evidence>
<evidence type="ECO:0000303" key="5">
    <source>
    </source>
</evidence>
<evidence type="ECO:0000305" key="6"/>
<feature type="chain" id="PRO_0000212451" description="Autophagy-related protein 14">
    <location>
        <begin position="1"/>
        <end position="364"/>
    </location>
</feature>
<feature type="region of interest" description="Cysteine repeats" evidence="1">
    <location>
        <begin position="5"/>
        <end position="20"/>
    </location>
</feature>
<feature type="coiled-coil region" evidence="3">
    <location>
        <begin position="38"/>
        <end position="114"/>
    </location>
</feature>
<sequence length="364" mass="42604">MGMQCPICETQSHVFYCAHCINSSPDLLIRLKFDLYILGKINNALRNKVDQYLEEVDDELNTNIRNGEQLESNIGVQILKERLGKVQVLRKERQNNKIKHKISQQDRRIKEKSRYIAELRSLINGPPKNQNRFTDPQTILKAQKQLQDKLEIAKRLSIQTRSEKLAMLNKWYSIRKRDSHDIPFTISYQPVISLKNFNRLPLPLIEGSLRKLIQYMNLLEHIYCIKYPSAMFVHEDEMLSLQGHSAKLKRNAPELLQVLIKLIQMILVVMTRSKLIDERKQNIDYAWILDQYDIDGLFYHMAMSIPIDTKSGAKNIQWSTDRLVDIVCSSLGAEKEEVLLKDHKKLEPPTDKKYEVSDRWYIVG</sequence>
<accession>Q6FX35</accession>
<protein>
    <recommendedName>
        <fullName evidence="5">Autophagy-related protein 14</fullName>
    </recommendedName>
</protein>
<organism>
    <name type="scientific">Candida glabrata (strain ATCC 2001 / BCRC 20586 / JCM 3761 / NBRC 0622 / NRRL Y-65 / CBS 138)</name>
    <name type="common">Yeast</name>
    <name type="synonym">Nakaseomyces glabratus</name>
    <dbReference type="NCBI Taxonomy" id="284593"/>
    <lineage>
        <taxon>Eukaryota</taxon>
        <taxon>Fungi</taxon>
        <taxon>Dikarya</taxon>
        <taxon>Ascomycota</taxon>
        <taxon>Saccharomycotina</taxon>
        <taxon>Saccharomycetes</taxon>
        <taxon>Saccharomycetales</taxon>
        <taxon>Saccharomycetaceae</taxon>
        <taxon>Nakaseomyces</taxon>
    </lineage>
</organism>
<comment type="function">
    <text evidence="2 4">Required for cytoplasm to vacuole transport (Cvt) and autophagy as a part of the autophagy-specific VPS34 PI3-kinase complex I (By similarity). This complex is essential to recruit the ATG8-phosphatidylinositol conjugate and the ATG12-ATG5 conjugate to the pre-autophagosomal structure. ATG14 mediates the specific binding of the VPS34 PI3-kinase complex I to the preautophagosomal structure (PAS) (By similarity). Required for survival and/or proliferation in kidneys and in brain (PubMed:25223215).</text>
</comment>
<comment type="subunit">
    <text evidence="2">Component of the autophagy-specific VPS34 PI3-kinase complex I composed of VPS15, VPS30, VPS34, ATG14 and ATG38. Interacts directly with ATG38.</text>
</comment>
<comment type="subcellular location">
    <subcellularLocation>
        <location evidence="2">Preautophagosomal structure membrane</location>
        <topology evidence="2">Peripheral membrane protein</topology>
    </subcellularLocation>
    <subcellularLocation>
        <location evidence="2">Vacuole membrane</location>
        <topology evidence="2">Peripheral membrane protein</topology>
    </subcellularLocation>
</comment>
<comment type="domain">
    <text evidence="2">Coiled-Coils at the N-terminal half are essential for interaction with VPS30 and VPS34 and autophagy.</text>
</comment>
<comment type="disruption phenotype">
    <text evidence="4">leads to seven- to eightfold decrease of the renal fungal load and four-fold lower fungal burden in the brain of infected mice (PubMed:25223215). Does not affect protein trafficking (PubMed:25223215).</text>
</comment>
<comment type="similarity">
    <text evidence="6">Belongs to the ATG14 family.</text>
</comment>
<dbReference type="EMBL" id="CR380949">
    <property type="protein sequence ID" value="CAG58113.1"/>
    <property type="molecule type" value="Genomic_DNA"/>
</dbReference>
<dbReference type="RefSeq" id="XP_445209.1">
    <property type="nucleotide sequence ID" value="XM_445209.1"/>
</dbReference>
<dbReference type="SMR" id="Q6FX35"/>
<dbReference type="FunCoup" id="Q6FX35">
    <property type="interactions" value="71"/>
</dbReference>
<dbReference type="STRING" id="284593.Q6FX35"/>
<dbReference type="EnsemblFungi" id="CAGL0C00627g-T">
    <property type="protein sequence ID" value="CAGL0C00627g-T-p1"/>
    <property type="gene ID" value="CAGL0C00627g"/>
</dbReference>
<dbReference type="GeneID" id="2886881"/>
<dbReference type="KEGG" id="cgr:2886881"/>
<dbReference type="CGD" id="CAL0127632">
    <property type="gene designation" value="ATG14"/>
</dbReference>
<dbReference type="VEuPathDB" id="FungiDB:CAGL0C00627g"/>
<dbReference type="eggNOG" id="ENOG502RY86">
    <property type="taxonomic scope" value="Eukaryota"/>
</dbReference>
<dbReference type="HOGENOM" id="CLU_069448_0_0_1"/>
<dbReference type="InParanoid" id="Q6FX35"/>
<dbReference type="OMA" id="MYCSHCI"/>
<dbReference type="Proteomes" id="UP000002428">
    <property type="component" value="Chromosome C"/>
</dbReference>
<dbReference type="GO" id="GO:0000329">
    <property type="term" value="C:fungal-type vacuole membrane"/>
    <property type="evidence" value="ECO:0007669"/>
    <property type="project" value="EnsemblFungi"/>
</dbReference>
<dbReference type="GO" id="GO:0034045">
    <property type="term" value="C:phagophore assembly site membrane"/>
    <property type="evidence" value="ECO:0007669"/>
    <property type="project" value="UniProtKB-SubCell"/>
</dbReference>
<dbReference type="GO" id="GO:0034271">
    <property type="term" value="C:phosphatidylinositol 3-kinase complex, class III, type I"/>
    <property type="evidence" value="ECO:0007669"/>
    <property type="project" value="EnsemblFungi"/>
</dbReference>
<dbReference type="GO" id="GO:0120095">
    <property type="term" value="C:vacuole-isolation membrane contact site"/>
    <property type="evidence" value="ECO:0007669"/>
    <property type="project" value="EnsemblFungi"/>
</dbReference>
<dbReference type="GO" id="GO:0051365">
    <property type="term" value="P:cellular response to potassium ion starvation"/>
    <property type="evidence" value="ECO:0007669"/>
    <property type="project" value="EnsemblFungi"/>
</dbReference>
<dbReference type="GO" id="GO:0032258">
    <property type="term" value="P:cytoplasm to vacuole targeting by the Cvt pathway"/>
    <property type="evidence" value="ECO:0007669"/>
    <property type="project" value="EnsemblFungi"/>
</dbReference>
<dbReference type="GO" id="GO:0000425">
    <property type="term" value="P:pexophagy"/>
    <property type="evidence" value="ECO:0007669"/>
    <property type="project" value="EnsemblFungi"/>
</dbReference>
<dbReference type="GO" id="GO:0034727">
    <property type="term" value="P:piecemeal microautophagy of the nucleus"/>
    <property type="evidence" value="ECO:0007669"/>
    <property type="project" value="EnsemblFungi"/>
</dbReference>
<dbReference type="InterPro" id="IPR023261">
    <property type="entry name" value="Autophagy-related_protein_14"/>
</dbReference>
<dbReference type="InterPro" id="IPR018791">
    <property type="entry name" value="UV_resistance/autophagy_Atg14"/>
</dbReference>
<dbReference type="Pfam" id="PF10186">
    <property type="entry name" value="ATG14"/>
    <property type="match status" value="1"/>
</dbReference>
<dbReference type="PRINTS" id="PR02030">
    <property type="entry name" value="AUTOPHGYRP14"/>
</dbReference>
<keyword id="KW-0072">Autophagy</keyword>
<keyword id="KW-0175">Coiled coil</keyword>
<keyword id="KW-0472">Membrane</keyword>
<keyword id="KW-0653">Protein transport</keyword>
<keyword id="KW-1185">Reference proteome</keyword>
<keyword id="KW-0813">Transport</keyword>
<keyword id="KW-0926">Vacuole</keyword>